<gene>
    <name evidence="1" type="primary">fosB</name>
    <name type="ordered locus">BCQ_2027</name>
</gene>
<dbReference type="EC" id="2.5.1.-" evidence="1"/>
<dbReference type="EMBL" id="CP000227">
    <property type="protein sequence ID" value="ACM12455.1"/>
    <property type="molecule type" value="Genomic_DNA"/>
</dbReference>
<dbReference type="SMR" id="B9IY29"/>
<dbReference type="KEGG" id="bcq:BCQ_2027"/>
<dbReference type="HOGENOM" id="CLU_121356_0_0_9"/>
<dbReference type="Proteomes" id="UP000000441">
    <property type="component" value="Chromosome"/>
</dbReference>
<dbReference type="GO" id="GO:0005737">
    <property type="term" value="C:cytoplasm"/>
    <property type="evidence" value="ECO:0007669"/>
    <property type="project" value="UniProtKB-SubCell"/>
</dbReference>
<dbReference type="GO" id="GO:0000287">
    <property type="term" value="F:magnesium ion binding"/>
    <property type="evidence" value="ECO:0007669"/>
    <property type="project" value="UniProtKB-UniRule"/>
</dbReference>
<dbReference type="GO" id="GO:0016765">
    <property type="term" value="F:transferase activity, transferring alkyl or aryl (other than methyl) groups"/>
    <property type="evidence" value="ECO:0007669"/>
    <property type="project" value="UniProtKB-UniRule"/>
</dbReference>
<dbReference type="GO" id="GO:0046677">
    <property type="term" value="P:response to antibiotic"/>
    <property type="evidence" value="ECO:0007669"/>
    <property type="project" value="UniProtKB-UniRule"/>
</dbReference>
<dbReference type="FunFam" id="3.10.180.10:FF:000015">
    <property type="entry name" value="Metallothiol transferase FosB"/>
    <property type="match status" value="1"/>
</dbReference>
<dbReference type="Gene3D" id="3.10.180.10">
    <property type="entry name" value="2,3-Dihydroxybiphenyl 1,2-Dioxygenase, domain 1"/>
    <property type="match status" value="1"/>
</dbReference>
<dbReference type="HAMAP" id="MF_01512">
    <property type="entry name" value="FosB"/>
    <property type="match status" value="1"/>
</dbReference>
<dbReference type="InterPro" id="IPR051332">
    <property type="entry name" value="Fosfomycin_Res_Enzymes"/>
</dbReference>
<dbReference type="InterPro" id="IPR029068">
    <property type="entry name" value="Glyas_Bleomycin-R_OHBP_Dase"/>
</dbReference>
<dbReference type="InterPro" id="IPR004360">
    <property type="entry name" value="Glyas_Fos-R_dOase_dom"/>
</dbReference>
<dbReference type="InterPro" id="IPR022858">
    <property type="entry name" value="Metallothiol_Trafse_FosB"/>
</dbReference>
<dbReference type="InterPro" id="IPR037523">
    <property type="entry name" value="VOC"/>
</dbReference>
<dbReference type="NCBIfam" id="NF000493">
    <property type="entry name" value="Fos_BSH"/>
    <property type="match status" value="1"/>
</dbReference>
<dbReference type="NCBIfam" id="NF041541">
    <property type="entry name" value="fosBx1_fam"/>
    <property type="match status" value="1"/>
</dbReference>
<dbReference type="NCBIfam" id="NF003152">
    <property type="entry name" value="PRK04101.1"/>
    <property type="match status" value="1"/>
</dbReference>
<dbReference type="PANTHER" id="PTHR36113:SF6">
    <property type="entry name" value="FOSFOMYCIN RESISTANCE PROTEIN FOSX"/>
    <property type="match status" value="1"/>
</dbReference>
<dbReference type="PANTHER" id="PTHR36113">
    <property type="entry name" value="LYASE, PUTATIVE-RELATED-RELATED"/>
    <property type="match status" value="1"/>
</dbReference>
<dbReference type="Pfam" id="PF00903">
    <property type="entry name" value="Glyoxalase"/>
    <property type="match status" value="1"/>
</dbReference>
<dbReference type="SUPFAM" id="SSF54593">
    <property type="entry name" value="Glyoxalase/Bleomycin resistance protein/Dihydroxybiphenyl dioxygenase"/>
    <property type="match status" value="1"/>
</dbReference>
<dbReference type="PROSITE" id="PS51819">
    <property type="entry name" value="VOC"/>
    <property type="match status" value="1"/>
</dbReference>
<evidence type="ECO:0000255" key="1">
    <source>
        <dbReference type="HAMAP-Rule" id="MF_01512"/>
    </source>
</evidence>
<evidence type="ECO:0000255" key="2">
    <source>
        <dbReference type="PROSITE-ProRule" id="PRU01163"/>
    </source>
</evidence>
<proteinExistence type="inferred from homology"/>
<sequence>MLKGINHLCFSVSNLEDSITFYEKVLEGELLVRGRKLAYFNICGVWIALNEEIHIPRNEIHQSYTHIAFSVEQKDFERLLQRLEENDVHILQGRERDVRDCESIYFVDPDGHKFEFHSGTLQDRLNYYREGKPHMTFY</sequence>
<name>FOSB_BACCQ</name>
<organism>
    <name type="scientific">Bacillus cereus (strain Q1)</name>
    <dbReference type="NCBI Taxonomy" id="361100"/>
    <lineage>
        <taxon>Bacteria</taxon>
        <taxon>Bacillati</taxon>
        <taxon>Bacillota</taxon>
        <taxon>Bacilli</taxon>
        <taxon>Bacillales</taxon>
        <taxon>Bacillaceae</taxon>
        <taxon>Bacillus</taxon>
        <taxon>Bacillus cereus group</taxon>
    </lineage>
</organism>
<reference key="1">
    <citation type="journal article" date="2009" name="J. Bacteriol.">
        <title>Complete genome sequence of the extremophilic Bacillus cereus strain Q1 with industrial applications.</title>
        <authorList>
            <person name="Xiong Z."/>
            <person name="Jiang Y."/>
            <person name="Qi D."/>
            <person name="Lu H."/>
            <person name="Yang F."/>
            <person name="Yang J."/>
            <person name="Chen L."/>
            <person name="Sun L."/>
            <person name="Xu X."/>
            <person name="Xue Y."/>
            <person name="Zhu Y."/>
            <person name="Jin Q."/>
        </authorList>
    </citation>
    <scope>NUCLEOTIDE SEQUENCE [LARGE SCALE GENOMIC DNA]</scope>
    <source>
        <strain>Q1</strain>
    </source>
</reference>
<keyword id="KW-0046">Antibiotic resistance</keyword>
<keyword id="KW-0963">Cytoplasm</keyword>
<keyword id="KW-0460">Magnesium</keyword>
<keyword id="KW-0479">Metal-binding</keyword>
<keyword id="KW-0808">Transferase</keyword>
<comment type="function">
    <text evidence="1">Metallothiol transferase which confers resistance to fosfomycin by catalyzing the addition of a thiol cofactor to fosfomycin. L-cysteine is probably the physiological thiol donor.</text>
</comment>
<comment type="cofactor">
    <cofactor evidence="1">
        <name>Mg(2+)</name>
        <dbReference type="ChEBI" id="CHEBI:18420"/>
    </cofactor>
</comment>
<comment type="subunit">
    <text evidence="1">Homodimer.</text>
</comment>
<comment type="subcellular location">
    <subcellularLocation>
        <location evidence="1">Cytoplasm</location>
    </subcellularLocation>
</comment>
<comment type="similarity">
    <text evidence="1">Belongs to the fosfomycin resistance protein family. FosB subfamily.</text>
</comment>
<feature type="chain" id="PRO_1000185063" description="Metallothiol transferase FosB">
    <location>
        <begin position="1"/>
        <end position="138"/>
    </location>
</feature>
<feature type="domain" description="VOC" evidence="2">
    <location>
        <begin position="4"/>
        <end position="119"/>
    </location>
</feature>
<feature type="active site" description="Proton donor/acceptor" evidence="2">
    <location>
        <position position="115"/>
    </location>
</feature>
<feature type="binding site" evidence="1">
    <location>
        <position position="7"/>
    </location>
    <ligand>
        <name>Mg(2+)</name>
        <dbReference type="ChEBI" id="CHEBI:18420"/>
    </ligand>
</feature>
<feature type="binding site" evidence="1">
    <location>
        <position position="66"/>
    </location>
    <ligand>
        <name>Mg(2+)</name>
        <dbReference type="ChEBI" id="CHEBI:18420"/>
    </ligand>
</feature>
<feature type="binding site" evidence="1">
    <location>
        <position position="115"/>
    </location>
    <ligand>
        <name>Mg(2+)</name>
        <dbReference type="ChEBI" id="CHEBI:18420"/>
    </ligand>
</feature>
<accession>B9IY29</accession>
<protein>
    <recommendedName>
        <fullName evidence="1">Metallothiol transferase FosB</fullName>
        <ecNumber evidence="1">2.5.1.-</ecNumber>
    </recommendedName>
    <alternativeName>
        <fullName evidence="1">Fosfomycin resistance protein</fullName>
    </alternativeName>
</protein>